<evidence type="ECO:0000255" key="1"/>
<evidence type="ECO:0000269" key="2">
    <source>
    </source>
</evidence>
<evidence type="ECO:0000269" key="3">
    <source>
    </source>
</evidence>
<evidence type="ECO:0000303" key="4">
    <source>
    </source>
</evidence>
<evidence type="ECO:0000305" key="5"/>
<evidence type="ECO:0000312" key="6">
    <source>
        <dbReference type="Araport" id="AT3G62910"/>
    </source>
</evidence>
<evidence type="ECO:0000312" key="7">
    <source>
        <dbReference type="EMBL" id="BAC82693.1"/>
    </source>
</evidence>
<comment type="function">
    <text evidence="2">May direct the termination of translation in response to the peptide chain termination codon UAG. Required for normal chloroplast development and plays essential roles in the termination of translation in plastids.</text>
</comment>
<comment type="subcellular location">
    <subcellularLocation>
        <location evidence="2">Plastid</location>
        <location evidence="2">Chloroplast</location>
    </subcellularLocation>
</comment>
<comment type="tissue specificity">
    <text evidence="2">Expressed in roots, leaves and stems.</text>
</comment>
<comment type="induction">
    <text evidence="2">By light.</text>
</comment>
<comment type="disruption phenotype">
    <text evidence="2 3">Albino and pale green (apg) phenotype and early seedling growth arrest.</text>
</comment>
<comment type="similarity">
    <text evidence="5">Belongs to the prokaryotic/mitochondrial release factor family.</text>
</comment>
<comment type="sequence caution" evidence="5">
    <conflict type="erroneous gene model prediction">
        <sequence resource="EMBL-CDS" id="CAB87736"/>
    </conflict>
</comment>
<reference key="1">
    <citation type="submission" date="2003-05" db="EMBL/GenBank/DDBJ databases">
        <title>Functional analysis of the chloroplast Release Factor 1 using a Ds-tagged Arabidopsis albino mutant.</title>
        <authorList>
            <person name="Motohashi R."/>
            <person name="Ito T."/>
            <person name="Ito K."/>
            <person name="Nagata N."/>
            <person name="Yoshida S."/>
            <person name="Shinozaki K."/>
        </authorList>
    </citation>
    <scope>NUCLEOTIDE SEQUENCE [MRNA]</scope>
</reference>
<reference key="2">
    <citation type="journal article" date="2000" name="Nature">
        <title>Sequence and analysis of chromosome 3 of the plant Arabidopsis thaliana.</title>
        <authorList>
            <person name="Salanoubat M."/>
            <person name="Lemcke K."/>
            <person name="Rieger M."/>
            <person name="Ansorge W."/>
            <person name="Unseld M."/>
            <person name="Fartmann B."/>
            <person name="Valle G."/>
            <person name="Bloecker H."/>
            <person name="Perez-Alonso M."/>
            <person name="Obermaier B."/>
            <person name="Delseny M."/>
            <person name="Boutry M."/>
            <person name="Grivell L.A."/>
            <person name="Mache R."/>
            <person name="Puigdomenech P."/>
            <person name="De Simone V."/>
            <person name="Choisne N."/>
            <person name="Artiguenave F."/>
            <person name="Robert C."/>
            <person name="Brottier P."/>
            <person name="Wincker P."/>
            <person name="Cattolico L."/>
            <person name="Weissenbach J."/>
            <person name="Saurin W."/>
            <person name="Quetier F."/>
            <person name="Schaefer M."/>
            <person name="Mueller-Auer S."/>
            <person name="Gabel C."/>
            <person name="Fuchs M."/>
            <person name="Benes V."/>
            <person name="Wurmbach E."/>
            <person name="Drzonek H."/>
            <person name="Erfle H."/>
            <person name="Jordan N."/>
            <person name="Bangert S."/>
            <person name="Wiedelmann R."/>
            <person name="Kranz H."/>
            <person name="Voss H."/>
            <person name="Holland R."/>
            <person name="Brandt P."/>
            <person name="Nyakatura G."/>
            <person name="Vezzi A."/>
            <person name="D'Angelo M."/>
            <person name="Pallavicini A."/>
            <person name="Toppo S."/>
            <person name="Simionati B."/>
            <person name="Conrad A."/>
            <person name="Hornischer K."/>
            <person name="Kauer G."/>
            <person name="Loehnert T.-H."/>
            <person name="Nordsiek G."/>
            <person name="Reichelt J."/>
            <person name="Scharfe M."/>
            <person name="Schoen O."/>
            <person name="Bargues M."/>
            <person name="Terol J."/>
            <person name="Climent J."/>
            <person name="Navarro P."/>
            <person name="Collado C."/>
            <person name="Perez-Perez A."/>
            <person name="Ottenwaelder B."/>
            <person name="Duchemin D."/>
            <person name="Cooke R."/>
            <person name="Laudie M."/>
            <person name="Berger-Llauro C."/>
            <person name="Purnelle B."/>
            <person name="Masuy D."/>
            <person name="de Haan M."/>
            <person name="Maarse A.C."/>
            <person name="Alcaraz J.-P."/>
            <person name="Cottet A."/>
            <person name="Casacuberta E."/>
            <person name="Monfort A."/>
            <person name="Argiriou A."/>
            <person name="Flores M."/>
            <person name="Liguori R."/>
            <person name="Vitale D."/>
            <person name="Mannhaupt G."/>
            <person name="Haase D."/>
            <person name="Schoof H."/>
            <person name="Rudd S."/>
            <person name="Zaccaria P."/>
            <person name="Mewes H.-W."/>
            <person name="Mayer K.F.X."/>
            <person name="Kaul S."/>
            <person name="Town C.D."/>
            <person name="Koo H.L."/>
            <person name="Tallon L.J."/>
            <person name="Jenkins J."/>
            <person name="Rooney T."/>
            <person name="Rizzo M."/>
            <person name="Walts A."/>
            <person name="Utterback T."/>
            <person name="Fujii C.Y."/>
            <person name="Shea T.P."/>
            <person name="Creasy T.H."/>
            <person name="Haas B."/>
            <person name="Maiti R."/>
            <person name="Wu D."/>
            <person name="Peterson J."/>
            <person name="Van Aken S."/>
            <person name="Pai G."/>
            <person name="Militscher J."/>
            <person name="Sellers P."/>
            <person name="Gill J.E."/>
            <person name="Feldblyum T.V."/>
            <person name="Preuss D."/>
            <person name="Lin X."/>
            <person name="Nierman W.C."/>
            <person name="Salzberg S.L."/>
            <person name="White O."/>
            <person name="Venter J.C."/>
            <person name="Fraser C.M."/>
            <person name="Kaneko T."/>
            <person name="Nakamura Y."/>
            <person name="Sato S."/>
            <person name="Kato T."/>
            <person name="Asamizu E."/>
            <person name="Sasamoto S."/>
            <person name="Kimura T."/>
            <person name="Idesawa K."/>
            <person name="Kawashima K."/>
            <person name="Kishida Y."/>
            <person name="Kiyokawa C."/>
            <person name="Kohara M."/>
            <person name="Matsumoto M."/>
            <person name="Matsuno A."/>
            <person name="Muraki A."/>
            <person name="Nakayama S."/>
            <person name="Nakazaki N."/>
            <person name="Shinpo S."/>
            <person name="Takeuchi C."/>
            <person name="Wada T."/>
            <person name="Watanabe A."/>
            <person name="Yamada M."/>
            <person name="Yasuda M."/>
            <person name="Tabata S."/>
        </authorList>
    </citation>
    <scope>NUCLEOTIDE SEQUENCE [LARGE SCALE GENOMIC DNA]</scope>
    <source>
        <strain>cv. Columbia</strain>
    </source>
</reference>
<reference key="3">
    <citation type="journal article" date="2017" name="Plant J.">
        <title>Araport11: a complete reannotation of the Arabidopsis thaliana reference genome.</title>
        <authorList>
            <person name="Cheng C.Y."/>
            <person name="Krishnakumar V."/>
            <person name="Chan A.P."/>
            <person name="Thibaud-Nissen F."/>
            <person name="Schobel S."/>
            <person name="Town C.D."/>
        </authorList>
    </citation>
    <scope>GENOME REANNOTATION</scope>
    <source>
        <strain>cv. Columbia</strain>
    </source>
</reference>
<reference key="4">
    <citation type="journal article" date="2003" name="Science">
        <title>Empirical analysis of transcriptional activity in the Arabidopsis genome.</title>
        <authorList>
            <person name="Yamada K."/>
            <person name="Lim J."/>
            <person name="Dale J.M."/>
            <person name="Chen H."/>
            <person name="Shinn P."/>
            <person name="Palm C.J."/>
            <person name="Southwick A.M."/>
            <person name="Wu H.C."/>
            <person name="Kim C.J."/>
            <person name="Nguyen M."/>
            <person name="Pham P.K."/>
            <person name="Cheuk R.F."/>
            <person name="Karlin-Newmann G."/>
            <person name="Liu S.X."/>
            <person name="Lam B."/>
            <person name="Sakano H."/>
            <person name="Wu T."/>
            <person name="Yu G."/>
            <person name="Miranda M."/>
            <person name="Quach H.L."/>
            <person name="Tripp M."/>
            <person name="Chang C.H."/>
            <person name="Lee J.M."/>
            <person name="Toriumi M.J."/>
            <person name="Chan M.M."/>
            <person name="Tang C.C."/>
            <person name="Onodera C.S."/>
            <person name="Deng J.M."/>
            <person name="Akiyama K."/>
            <person name="Ansari Y."/>
            <person name="Arakawa T."/>
            <person name="Banh J."/>
            <person name="Banno F."/>
            <person name="Bowser L."/>
            <person name="Brooks S.Y."/>
            <person name="Carninci P."/>
            <person name="Chao Q."/>
            <person name="Choy N."/>
            <person name="Enju A."/>
            <person name="Goldsmith A.D."/>
            <person name="Gurjal M."/>
            <person name="Hansen N.F."/>
            <person name="Hayashizaki Y."/>
            <person name="Johnson-Hopson C."/>
            <person name="Hsuan V.W."/>
            <person name="Iida K."/>
            <person name="Karnes M."/>
            <person name="Khan S."/>
            <person name="Koesema E."/>
            <person name="Ishida J."/>
            <person name="Jiang P.X."/>
            <person name="Jones T."/>
            <person name="Kawai J."/>
            <person name="Kamiya A."/>
            <person name="Meyers C."/>
            <person name="Nakajima M."/>
            <person name="Narusaka M."/>
            <person name="Seki M."/>
            <person name="Sakurai T."/>
            <person name="Satou M."/>
            <person name="Tamse R."/>
            <person name="Vaysberg M."/>
            <person name="Wallender E.K."/>
            <person name="Wong C."/>
            <person name="Yamamura Y."/>
            <person name="Yuan S."/>
            <person name="Shinozaki K."/>
            <person name="Davis R.W."/>
            <person name="Theologis A."/>
            <person name="Ecker J.R."/>
        </authorList>
    </citation>
    <scope>NUCLEOTIDE SEQUENCE [LARGE SCALE MRNA]</scope>
    <source>
        <strain>cv. Columbia</strain>
    </source>
</reference>
<reference key="5">
    <citation type="journal article" date="2007" name="Plant Mol. Biol.">
        <title>Chloroplast ribosome release factor 1 (AtcpRF1) is essential for chloroplast development.</title>
        <authorList>
            <person name="Motohashi R."/>
            <person name="Yamazaki T."/>
            <person name="Myouga F."/>
            <person name="Ito T."/>
            <person name="Ito K."/>
            <person name="Satou M."/>
            <person name="Kobayashi M."/>
            <person name="Nagata N."/>
            <person name="Yoshida S."/>
            <person name="Nagashima A."/>
            <person name="Tanaka K."/>
            <person name="Takahashi S."/>
            <person name="Shinozaki K."/>
        </authorList>
    </citation>
    <scope>FUNCTION</scope>
    <scope>SUBCELLULAR LOCATION</scope>
    <scope>TISSUE SPECIFICITY</scope>
    <scope>INDUCTION BY LIGHT</scope>
    <scope>DISRUPTION PHENOTYPE</scope>
</reference>
<reference key="6">
    <citation type="journal article" date="2014" name="Plant Mol. Biol.">
        <title>Integrated analysis of transcriptome and metabolome of Arabidopsis albino or pale green mutants with disrupted nuclear-encoded chloroplast proteins.</title>
        <authorList>
            <person name="Satou M."/>
            <person name="Enoki H."/>
            <person name="Oikawa A."/>
            <person name="Ohta D."/>
            <person name="Saito K."/>
            <person name="Hachiya T."/>
            <person name="Sakakibara H."/>
            <person name="Kusano M."/>
            <person name="Fukushima A."/>
            <person name="Saito K."/>
            <person name="Kobayashi M."/>
            <person name="Nagata N."/>
            <person name="Myouga F."/>
            <person name="Shinozaki K."/>
            <person name="Motohashi R."/>
        </authorList>
    </citation>
    <scope>DISRUPTION PHENOTYPE</scope>
</reference>
<keyword id="KW-0150">Chloroplast</keyword>
<keyword id="KW-0341">Growth regulation</keyword>
<keyword id="KW-0934">Plastid</keyword>
<keyword id="KW-0648">Protein biosynthesis</keyword>
<keyword id="KW-1185">Reference proteome</keyword>
<keyword id="KW-0809">Transit peptide</keyword>
<organism>
    <name type="scientific">Arabidopsis thaliana</name>
    <name type="common">Mouse-ear cress</name>
    <dbReference type="NCBI Taxonomy" id="3702"/>
    <lineage>
        <taxon>Eukaryota</taxon>
        <taxon>Viridiplantae</taxon>
        <taxon>Streptophyta</taxon>
        <taxon>Embryophyta</taxon>
        <taxon>Tracheophyta</taxon>
        <taxon>Spermatophyta</taxon>
        <taxon>Magnoliopsida</taxon>
        <taxon>eudicotyledons</taxon>
        <taxon>Gunneridae</taxon>
        <taxon>Pentapetalae</taxon>
        <taxon>rosids</taxon>
        <taxon>malvids</taxon>
        <taxon>Brassicales</taxon>
        <taxon>Brassicaceae</taxon>
        <taxon>Camelineae</taxon>
        <taxon>Arabidopsis</taxon>
    </lineage>
</organism>
<dbReference type="EMBL" id="AB109893">
    <property type="protein sequence ID" value="BAC82693.1"/>
    <property type="molecule type" value="mRNA"/>
</dbReference>
<dbReference type="EMBL" id="AL163816">
    <property type="protein sequence ID" value="CAB87736.1"/>
    <property type="status" value="ALT_SEQ"/>
    <property type="molecule type" value="Genomic_DNA"/>
</dbReference>
<dbReference type="EMBL" id="CP002686">
    <property type="protein sequence ID" value="AEE80410.1"/>
    <property type="molecule type" value="Genomic_DNA"/>
</dbReference>
<dbReference type="EMBL" id="AY090253">
    <property type="protein sequence ID" value="AAL90914.1"/>
    <property type="molecule type" value="mRNA"/>
</dbReference>
<dbReference type="EMBL" id="AY125535">
    <property type="protein sequence ID" value="AAM78045.1"/>
    <property type="molecule type" value="mRNA"/>
</dbReference>
<dbReference type="PIR" id="T48080">
    <property type="entry name" value="T48080"/>
</dbReference>
<dbReference type="RefSeq" id="NP_191850.2">
    <property type="nucleotide sequence ID" value="NM_116156.5"/>
</dbReference>
<dbReference type="SMR" id="Q8RX79"/>
<dbReference type="FunCoup" id="Q8RX79">
    <property type="interactions" value="1289"/>
</dbReference>
<dbReference type="STRING" id="3702.Q8RX79"/>
<dbReference type="iPTMnet" id="Q8RX79"/>
<dbReference type="PaxDb" id="3702-AT3G62910.1"/>
<dbReference type="ProteomicsDB" id="246948"/>
<dbReference type="EnsemblPlants" id="AT3G62910.1">
    <property type="protein sequence ID" value="AT3G62910.1"/>
    <property type="gene ID" value="AT3G62910"/>
</dbReference>
<dbReference type="GeneID" id="825466"/>
<dbReference type="Gramene" id="AT3G62910.1">
    <property type="protein sequence ID" value="AT3G62910.1"/>
    <property type="gene ID" value="AT3G62910"/>
</dbReference>
<dbReference type="KEGG" id="ath:AT3G62910"/>
<dbReference type="Araport" id="AT3G62910"/>
<dbReference type="TAIR" id="AT3G62910">
    <property type="gene designation" value="APG3"/>
</dbReference>
<dbReference type="eggNOG" id="KOG2726">
    <property type="taxonomic scope" value="Eukaryota"/>
</dbReference>
<dbReference type="HOGENOM" id="CLU_036856_0_1_1"/>
<dbReference type="InParanoid" id="Q8RX79"/>
<dbReference type="OMA" id="DHRVGFK"/>
<dbReference type="OrthoDB" id="2019491at2759"/>
<dbReference type="PhylomeDB" id="Q8RX79"/>
<dbReference type="PRO" id="PR:Q8RX79"/>
<dbReference type="Proteomes" id="UP000006548">
    <property type="component" value="Chromosome 3"/>
</dbReference>
<dbReference type="ExpressionAtlas" id="Q8RX79">
    <property type="expression patterns" value="baseline and differential"/>
</dbReference>
<dbReference type="GO" id="GO:0009507">
    <property type="term" value="C:chloroplast"/>
    <property type="evidence" value="ECO:0000314"/>
    <property type="project" value="TAIR"/>
</dbReference>
<dbReference type="GO" id="GO:0003747">
    <property type="term" value="F:translation release factor activity"/>
    <property type="evidence" value="ECO:0000316"/>
    <property type="project" value="TAIR"/>
</dbReference>
<dbReference type="GO" id="GO:0016149">
    <property type="term" value="F:translation release factor activity, codon specific"/>
    <property type="evidence" value="ECO:0007669"/>
    <property type="project" value="InterPro"/>
</dbReference>
<dbReference type="GO" id="GO:0009658">
    <property type="term" value="P:chloroplast organization"/>
    <property type="evidence" value="ECO:0000315"/>
    <property type="project" value="TAIR"/>
</dbReference>
<dbReference type="GO" id="GO:0032544">
    <property type="term" value="P:plastid translation"/>
    <property type="evidence" value="ECO:0000316"/>
    <property type="project" value="TAIR"/>
</dbReference>
<dbReference type="GO" id="GO:0010027">
    <property type="term" value="P:thylakoid membrane organization"/>
    <property type="evidence" value="ECO:0000315"/>
    <property type="project" value="TAIR"/>
</dbReference>
<dbReference type="GO" id="GO:0006415">
    <property type="term" value="P:translational termination"/>
    <property type="evidence" value="ECO:0000316"/>
    <property type="project" value="TAIR"/>
</dbReference>
<dbReference type="FunFam" id="3.30.160.20:FF:000004">
    <property type="entry name" value="Peptide chain release factor 1"/>
    <property type="match status" value="1"/>
</dbReference>
<dbReference type="FunFam" id="3.30.70.1660:FF:000002">
    <property type="entry name" value="Peptide chain release factor 1"/>
    <property type="match status" value="1"/>
</dbReference>
<dbReference type="FunFam" id="3.30.70.1660:FF:000014">
    <property type="entry name" value="Peptide chain release factor 1"/>
    <property type="match status" value="1"/>
</dbReference>
<dbReference type="Gene3D" id="3.30.160.20">
    <property type="match status" value="1"/>
</dbReference>
<dbReference type="Gene3D" id="3.30.70.1660">
    <property type="match status" value="2"/>
</dbReference>
<dbReference type="Gene3D" id="6.10.140.1950">
    <property type="match status" value="1"/>
</dbReference>
<dbReference type="HAMAP" id="MF_00093">
    <property type="entry name" value="Rel_fac_1"/>
    <property type="match status" value="1"/>
</dbReference>
<dbReference type="InterPro" id="IPR005139">
    <property type="entry name" value="PCRF"/>
</dbReference>
<dbReference type="InterPro" id="IPR000352">
    <property type="entry name" value="Pep_chain_release_fac_I"/>
</dbReference>
<dbReference type="InterPro" id="IPR045853">
    <property type="entry name" value="Pep_chain_release_fac_I_sf"/>
</dbReference>
<dbReference type="InterPro" id="IPR050057">
    <property type="entry name" value="Prokaryotic/Mito_RF"/>
</dbReference>
<dbReference type="InterPro" id="IPR004373">
    <property type="entry name" value="RF-1"/>
</dbReference>
<dbReference type="NCBIfam" id="TIGR00019">
    <property type="entry name" value="prfA"/>
    <property type="match status" value="1"/>
</dbReference>
<dbReference type="NCBIfam" id="NF001859">
    <property type="entry name" value="PRK00591.1"/>
    <property type="match status" value="1"/>
</dbReference>
<dbReference type="PANTHER" id="PTHR43804">
    <property type="entry name" value="LD18447P"/>
    <property type="match status" value="1"/>
</dbReference>
<dbReference type="PANTHER" id="PTHR43804:SF8">
    <property type="entry name" value="PEPTIDE CHAIN RELEASE FACTOR APG3, CHLOROPLASTIC"/>
    <property type="match status" value="1"/>
</dbReference>
<dbReference type="Pfam" id="PF03462">
    <property type="entry name" value="PCRF"/>
    <property type="match status" value="1"/>
</dbReference>
<dbReference type="Pfam" id="PF00472">
    <property type="entry name" value="RF-1"/>
    <property type="match status" value="1"/>
</dbReference>
<dbReference type="SMART" id="SM00937">
    <property type="entry name" value="PCRF"/>
    <property type="match status" value="1"/>
</dbReference>
<dbReference type="SUPFAM" id="SSF75620">
    <property type="entry name" value="Release factor"/>
    <property type="match status" value="1"/>
</dbReference>
<dbReference type="PROSITE" id="PS00745">
    <property type="entry name" value="RF_PROK_I"/>
    <property type="match status" value="1"/>
</dbReference>
<feature type="transit peptide" description="Chloroplast" evidence="1">
    <location>
        <begin position="1"/>
        <end position="50"/>
    </location>
</feature>
<feature type="chain" id="PRO_0000430967" description="Peptide chain release factor APG3, chloroplastic" evidence="1">
    <location>
        <begin position="51"/>
        <end position="422"/>
    </location>
</feature>
<proteinExistence type="evidence at transcript level"/>
<gene>
    <name evidence="4" type="primary">APG3</name>
    <name evidence="4" type="synonym">RF1</name>
    <name evidence="6" type="ordered locus">At3g62910</name>
    <name evidence="7" type="ORF">T20O10.10</name>
</gene>
<sequence>MNSSMTTSPTARAFLHLHSSPFTLRSRKSPSGVCLVSWPPSRSRRTRRLVCMAEPYLIRKMESVEKTWKELSVKLADPDVVSNQSEYQKLAQSMSELDEVVTVFRRFKDCEKQLLESKVLAKEAGDDEDMAEMIGSEINSLTKEIEELEKQLKVLLLPSDPLDARNILLEVRAGTGGDEAAIWTGDLVRMYQRYSERSSWKFSMVSCSEAEHGGYKTCVMEIKGNRVYSKLKYESGVHRVQRVPQTETQGRVHTSTATVAIMPEADEVEVVIDPKDIELTSARSGGAGGQNVNKVETAIDLFHKPSGIRIFCTEERTQIRNKARAFQLLRAKLYEIKVREQQEKIRNERKSQVGTGARSEKIRTYNYKDSRVTDHRLKMNFALTTFLDGALEDAVQACAALEQKELMEELSESVAASSATSG</sequence>
<protein>
    <recommendedName>
        <fullName evidence="5">Peptide chain release factor APG3, chloroplastic</fullName>
    </recommendedName>
    <alternativeName>
        <fullName evidence="4">Chloroplast ribosome release factor 1</fullName>
        <shortName evidence="4">AtcpRF1</shortName>
    </alternativeName>
    <alternativeName>
        <fullName evidence="4">Protein ALBINO AND PALE GREEN 3</fullName>
    </alternativeName>
</protein>
<name>APG3_ARATH</name>
<accession>Q8RX79</accession>
<accession>Q9LYD0</accession>